<protein>
    <recommendedName>
        <fullName>Ribonuclease HI</fullName>
        <shortName>RNase HI</shortName>
        <ecNumber>3.1.26.4</ecNumber>
    </recommendedName>
</protein>
<comment type="function">
    <text evidence="1">Endonuclease that specifically degrades the RNA of RNA-DNA hybrids.</text>
</comment>
<comment type="catalytic activity">
    <reaction>
        <text>Endonucleolytic cleavage to 5'-phosphomonoester.</text>
        <dbReference type="EC" id="3.1.26.4"/>
    </reaction>
</comment>
<comment type="cofactor">
    <cofactor evidence="1">
        <name>Mg(2+)</name>
        <dbReference type="ChEBI" id="CHEBI:18420"/>
    </cofactor>
    <text evidence="1">Binds 1 Mg(2+) ion per subunit. May bind a second metal ion at a regulatory site, or after substrate binding.</text>
</comment>
<comment type="subunit">
    <text evidence="1">Monomer.</text>
</comment>
<comment type="subcellular location">
    <subcellularLocation>
        <location evidence="4">Cytoplasm</location>
    </subcellularLocation>
</comment>
<comment type="similarity">
    <text evidence="4">Belongs to the RNase H family.</text>
</comment>
<comment type="sequence caution" evidence="4">
    <conflict type="erroneous initiation">
        <sequence resource="EMBL-CDS" id="CAB42933"/>
    </conflict>
</comment>
<organism>
    <name type="scientific">Streptomyces coelicolor (strain ATCC BAA-471 / A3(2) / M145)</name>
    <dbReference type="NCBI Taxonomy" id="100226"/>
    <lineage>
        <taxon>Bacteria</taxon>
        <taxon>Bacillati</taxon>
        <taxon>Actinomycetota</taxon>
        <taxon>Actinomycetes</taxon>
        <taxon>Kitasatosporales</taxon>
        <taxon>Streptomycetaceae</taxon>
        <taxon>Streptomyces</taxon>
        <taxon>Streptomyces albidoflavus group</taxon>
    </lineage>
</organism>
<dbReference type="EC" id="3.1.26.4"/>
<dbReference type="EMBL" id="AL939131">
    <property type="protein sequence ID" value="CAB42933.1"/>
    <property type="status" value="ALT_INIT"/>
    <property type="molecule type" value="Genomic_DNA"/>
</dbReference>
<dbReference type="PIR" id="T35324">
    <property type="entry name" value="T35324"/>
</dbReference>
<dbReference type="RefSeq" id="NP_631340.1">
    <property type="nucleotide sequence ID" value="NC_003888.3"/>
</dbReference>
<dbReference type="SMR" id="Q9X7R6"/>
<dbReference type="STRING" id="100226.gene:17764944"/>
<dbReference type="PaxDb" id="100226-SCO7284"/>
<dbReference type="KEGG" id="sco:SCO7284"/>
<dbReference type="PATRIC" id="fig|100226.15.peg.7386"/>
<dbReference type="eggNOG" id="COG0328">
    <property type="taxonomic scope" value="Bacteria"/>
</dbReference>
<dbReference type="HOGENOM" id="CLU_030894_6_1_11"/>
<dbReference type="InParanoid" id="Q9X7R6"/>
<dbReference type="OrthoDB" id="7845843at2"/>
<dbReference type="PhylomeDB" id="Q9X7R6"/>
<dbReference type="Proteomes" id="UP000001973">
    <property type="component" value="Chromosome"/>
</dbReference>
<dbReference type="GO" id="GO:0005737">
    <property type="term" value="C:cytoplasm"/>
    <property type="evidence" value="ECO:0007669"/>
    <property type="project" value="UniProtKB-SubCell"/>
</dbReference>
<dbReference type="GO" id="GO:0000287">
    <property type="term" value="F:magnesium ion binding"/>
    <property type="evidence" value="ECO:0007669"/>
    <property type="project" value="UniProtKB-UniRule"/>
</dbReference>
<dbReference type="GO" id="GO:0003676">
    <property type="term" value="F:nucleic acid binding"/>
    <property type="evidence" value="ECO:0007669"/>
    <property type="project" value="InterPro"/>
</dbReference>
<dbReference type="GO" id="GO:0004523">
    <property type="term" value="F:RNA-DNA hybrid ribonuclease activity"/>
    <property type="evidence" value="ECO:0007669"/>
    <property type="project" value="UniProtKB-UniRule"/>
</dbReference>
<dbReference type="GO" id="GO:0006401">
    <property type="term" value="P:RNA catabolic process"/>
    <property type="evidence" value="ECO:0007669"/>
    <property type="project" value="UniProtKB-UniRule"/>
</dbReference>
<dbReference type="CDD" id="cd09278">
    <property type="entry name" value="RNase_HI_prokaryote_like"/>
    <property type="match status" value="1"/>
</dbReference>
<dbReference type="FunFam" id="3.30.420.10:FF:000086">
    <property type="entry name" value="Ribonuclease H"/>
    <property type="match status" value="1"/>
</dbReference>
<dbReference type="Gene3D" id="3.30.420.10">
    <property type="entry name" value="Ribonuclease H-like superfamily/Ribonuclease H"/>
    <property type="match status" value="1"/>
</dbReference>
<dbReference type="HAMAP" id="MF_00042">
    <property type="entry name" value="RNase_H"/>
    <property type="match status" value="1"/>
</dbReference>
<dbReference type="InterPro" id="IPR050092">
    <property type="entry name" value="RNase_H"/>
</dbReference>
<dbReference type="InterPro" id="IPR012337">
    <property type="entry name" value="RNaseH-like_sf"/>
</dbReference>
<dbReference type="InterPro" id="IPR002156">
    <property type="entry name" value="RNaseH_domain"/>
</dbReference>
<dbReference type="InterPro" id="IPR036397">
    <property type="entry name" value="RNaseH_sf"/>
</dbReference>
<dbReference type="InterPro" id="IPR022892">
    <property type="entry name" value="RNaseHI"/>
</dbReference>
<dbReference type="PANTHER" id="PTHR10642">
    <property type="entry name" value="RIBONUCLEASE H1"/>
    <property type="match status" value="1"/>
</dbReference>
<dbReference type="PANTHER" id="PTHR10642:SF26">
    <property type="entry name" value="RIBONUCLEASE H1"/>
    <property type="match status" value="1"/>
</dbReference>
<dbReference type="Pfam" id="PF00075">
    <property type="entry name" value="RNase_H"/>
    <property type="match status" value="1"/>
</dbReference>
<dbReference type="SUPFAM" id="SSF53098">
    <property type="entry name" value="Ribonuclease H-like"/>
    <property type="match status" value="1"/>
</dbReference>
<dbReference type="PROSITE" id="PS50879">
    <property type="entry name" value="RNASE_H_1"/>
    <property type="match status" value="1"/>
</dbReference>
<keyword id="KW-0963">Cytoplasm</keyword>
<keyword id="KW-0255">Endonuclease</keyword>
<keyword id="KW-0378">Hydrolase</keyword>
<keyword id="KW-0460">Magnesium</keyword>
<keyword id="KW-0479">Metal-binding</keyword>
<keyword id="KW-0540">Nuclease</keyword>
<keyword id="KW-1185">Reference proteome</keyword>
<sequence length="231" mass="24297">MRERAVAACDGASKGNPGPAGWAWVVADASENPVRWEAGPLGKATNNIAELTALERLLASTDPDVPLEVRMDSQYAMKAVTTWLPGWKRNGWKTAAGKPVANRELVVRIDELLDGRSVEFRYVPAHQVDGDRLNDFADRAASQAAVVQEAAGSALGSPEPPPAPDVPAARRAPRRGSSGAARKGGGGSSARTIKAKFPGRCLCGRPYAAGEPIAKNDQGWGHPECRTVAAG</sequence>
<reference key="1">
    <citation type="journal article" date="2002" name="Nature">
        <title>Complete genome sequence of the model actinomycete Streptomyces coelicolor A3(2).</title>
        <authorList>
            <person name="Bentley S.D."/>
            <person name="Chater K.F."/>
            <person name="Cerdeno-Tarraga A.-M."/>
            <person name="Challis G.L."/>
            <person name="Thomson N.R."/>
            <person name="James K.D."/>
            <person name="Harris D.E."/>
            <person name="Quail M.A."/>
            <person name="Kieser H."/>
            <person name="Harper D."/>
            <person name="Bateman A."/>
            <person name="Brown S."/>
            <person name="Chandra G."/>
            <person name="Chen C.W."/>
            <person name="Collins M."/>
            <person name="Cronin A."/>
            <person name="Fraser A."/>
            <person name="Goble A."/>
            <person name="Hidalgo J."/>
            <person name="Hornsby T."/>
            <person name="Howarth S."/>
            <person name="Huang C.-H."/>
            <person name="Kieser T."/>
            <person name="Larke L."/>
            <person name="Murphy L.D."/>
            <person name="Oliver K."/>
            <person name="O'Neil S."/>
            <person name="Rabbinowitsch E."/>
            <person name="Rajandream M.A."/>
            <person name="Rutherford K.M."/>
            <person name="Rutter S."/>
            <person name="Seeger K."/>
            <person name="Saunders D."/>
            <person name="Sharp S."/>
            <person name="Squares R."/>
            <person name="Squares S."/>
            <person name="Taylor K."/>
            <person name="Warren T."/>
            <person name="Wietzorrek A."/>
            <person name="Woodward J.R."/>
            <person name="Barrell B.G."/>
            <person name="Parkhill J."/>
            <person name="Hopwood D.A."/>
        </authorList>
    </citation>
    <scope>NUCLEOTIDE SEQUENCE [LARGE SCALE GENOMIC DNA]</scope>
    <source>
        <strain>ATCC BAA-471 / A3(2) / M145</strain>
    </source>
</reference>
<accession>Q9X7R6</accession>
<proteinExistence type="inferred from homology"/>
<feature type="chain" id="PRO_0000195406" description="Ribonuclease HI">
    <location>
        <begin position="1"/>
        <end position="231"/>
    </location>
</feature>
<feature type="domain" description="RNase H type-1" evidence="2">
    <location>
        <begin position="1"/>
        <end position="146"/>
    </location>
</feature>
<feature type="region of interest" description="Disordered" evidence="3">
    <location>
        <begin position="148"/>
        <end position="192"/>
    </location>
</feature>
<feature type="region of interest" description="Disordered" evidence="3">
    <location>
        <begin position="212"/>
        <end position="231"/>
    </location>
</feature>
<feature type="compositionally biased region" description="Low complexity" evidence="3">
    <location>
        <begin position="148"/>
        <end position="157"/>
    </location>
</feature>
<feature type="compositionally biased region" description="Low complexity" evidence="3">
    <location>
        <begin position="166"/>
        <end position="181"/>
    </location>
</feature>
<feature type="binding site" evidence="1">
    <location>
        <position position="10"/>
    </location>
    <ligand>
        <name>Mg(2+)</name>
        <dbReference type="ChEBI" id="CHEBI:18420"/>
        <label>1</label>
    </ligand>
</feature>
<feature type="binding site" evidence="1">
    <location>
        <position position="10"/>
    </location>
    <ligand>
        <name>Mg(2+)</name>
        <dbReference type="ChEBI" id="CHEBI:18420"/>
        <label>2</label>
    </ligand>
</feature>
<feature type="binding site" evidence="1">
    <location>
        <position position="50"/>
    </location>
    <ligand>
        <name>Mg(2+)</name>
        <dbReference type="ChEBI" id="CHEBI:18420"/>
        <label>1</label>
    </ligand>
</feature>
<feature type="binding site" evidence="1">
    <location>
        <position position="72"/>
    </location>
    <ligand>
        <name>Mg(2+)</name>
        <dbReference type="ChEBI" id="CHEBI:18420"/>
        <label>1</label>
    </ligand>
</feature>
<feature type="binding site" evidence="1">
    <location>
        <position position="138"/>
    </location>
    <ligand>
        <name>Mg(2+)</name>
        <dbReference type="ChEBI" id="CHEBI:18420"/>
        <label>2</label>
    </ligand>
</feature>
<evidence type="ECO:0000250" key="1"/>
<evidence type="ECO:0000255" key="2">
    <source>
        <dbReference type="PROSITE-ProRule" id="PRU00408"/>
    </source>
</evidence>
<evidence type="ECO:0000256" key="3">
    <source>
        <dbReference type="SAM" id="MobiDB-lite"/>
    </source>
</evidence>
<evidence type="ECO:0000305" key="4"/>
<gene>
    <name type="primary">rnhA</name>
    <name type="ordered locus">SCO7284</name>
    <name type="ORF">SC5H1.08c</name>
</gene>
<name>RNH_STRCO</name>